<name>RBL_NITMU</name>
<evidence type="ECO:0000255" key="1">
    <source>
        <dbReference type="HAMAP-Rule" id="MF_01338"/>
    </source>
</evidence>
<organism>
    <name type="scientific">Nitrosospira multiformis (strain ATCC 25196 / NCIMB 11849 / C 71)</name>
    <dbReference type="NCBI Taxonomy" id="323848"/>
    <lineage>
        <taxon>Bacteria</taxon>
        <taxon>Pseudomonadati</taxon>
        <taxon>Pseudomonadota</taxon>
        <taxon>Betaproteobacteria</taxon>
        <taxon>Nitrosomonadales</taxon>
        <taxon>Nitrosomonadaceae</taxon>
        <taxon>Nitrosospira</taxon>
    </lineage>
</organism>
<feature type="chain" id="PRO_0000251449" description="Ribulose bisphosphate carboxylase large chain">
    <location>
        <begin position="1"/>
        <end position="489"/>
    </location>
</feature>
<feature type="active site" description="Proton acceptor" evidence="1">
    <location>
        <position position="180"/>
    </location>
</feature>
<feature type="active site" description="Proton acceptor" evidence="1">
    <location>
        <position position="298"/>
    </location>
</feature>
<feature type="binding site" description="in homodimeric partner" evidence="1">
    <location>
        <position position="128"/>
    </location>
    <ligand>
        <name>substrate</name>
    </ligand>
</feature>
<feature type="binding site" evidence="1">
    <location>
        <position position="178"/>
    </location>
    <ligand>
        <name>substrate</name>
    </ligand>
</feature>
<feature type="binding site" evidence="1">
    <location>
        <position position="182"/>
    </location>
    <ligand>
        <name>substrate</name>
    </ligand>
</feature>
<feature type="binding site" description="via carbamate group" evidence="1">
    <location>
        <position position="206"/>
    </location>
    <ligand>
        <name>Mg(2+)</name>
        <dbReference type="ChEBI" id="CHEBI:18420"/>
    </ligand>
</feature>
<feature type="binding site" evidence="1">
    <location>
        <position position="208"/>
    </location>
    <ligand>
        <name>Mg(2+)</name>
        <dbReference type="ChEBI" id="CHEBI:18420"/>
    </ligand>
</feature>
<feature type="binding site" evidence="1">
    <location>
        <position position="209"/>
    </location>
    <ligand>
        <name>Mg(2+)</name>
        <dbReference type="ChEBI" id="CHEBI:18420"/>
    </ligand>
</feature>
<feature type="binding site" evidence="1">
    <location>
        <position position="299"/>
    </location>
    <ligand>
        <name>substrate</name>
    </ligand>
</feature>
<feature type="binding site" evidence="1">
    <location>
        <position position="331"/>
    </location>
    <ligand>
        <name>substrate</name>
    </ligand>
</feature>
<feature type="binding site" evidence="1">
    <location>
        <position position="383"/>
    </location>
    <ligand>
        <name>substrate</name>
    </ligand>
</feature>
<feature type="site" description="Transition state stabilizer" evidence="1">
    <location>
        <position position="338"/>
    </location>
</feature>
<feature type="modified residue" description="N6-carboxylysine" evidence="1">
    <location>
        <position position="206"/>
    </location>
</feature>
<protein>
    <recommendedName>
        <fullName evidence="1">Ribulose bisphosphate carboxylase large chain</fullName>
        <shortName evidence="1">RuBisCO large subunit</shortName>
        <ecNumber evidence="1">4.1.1.39</ecNumber>
    </recommendedName>
</protein>
<dbReference type="EC" id="4.1.1.39" evidence="1"/>
<dbReference type="EMBL" id="CP000103">
    <property type="protein sequence ID" value="ABB73993.1"/>
    <property type="molecule type" value="Genomic_DNA"/>
</dbReference>
<dbReference type="RefSeq" id="WP_011380043.1">
    <property type="nucleotide sequence ID" value="NC_007614.1"/>
</dbReference>
<dbReference type="SMR" id="Q2YB78"/>
<dbReference type="STRING" id="323848.Nmul_A0686"/>
<dbReference type="KEGG" id="nmu:Nmul_A0686"/>
<dbReference type="eggNOG" id="COG1850">
    <property type="taxonomic scope" value="Bacteria"/>
</dbReference>
<dbReference type="HOGENOM" id="CLU_031450_2_0_4"/>
<dbReference type="Proteomes" id="UP000002718">
    <property type="component" value="Chromosome"/>
</dbReference>
<dbReference type="GO" id="GO:0000287">
    <property type="term" value="F:magnesium ion binding"/>
    <property type="evidence" value="ECO:0007669"/>
    <property type="project" value="UniProtKB-UniRule"/>
</dbReference>
<dbReference type="GO" id="GO:0004497">
    <property type="term" value="F:monooxygenase activity"/>
    <property type="evidence" value="ECO:0007669"/>
    <property type="project" value="UniProtKB-KW"/>
</dbReference>
<dbReference type="GO" id="GO:0016984">
    <property type="term" value="F:ribulose-bisphosphate carboxylase activity"/>
    <property type="evidence" value="ECO:0007669"/>
    <property type="project" value="UniProtKB-UniRule"/>
</dbReference>
<dbReference type="GO" id="GO:0019253">
    <property type="term" value="P:reductive pentose-phosphate cycle"/>
    <property type="evidence" value="ECO:0007669"/>
    <property type="project" value="UniProtKB-UniRule"/>
</dbReference>
<dbReference type="CDD" id="cd08212">
    <property type="entry name" value="RuBisCO_large_I"/>
    <property type="match status" value="1"/>
</dbReference>
<dbReference type="Gene3D" id="3.20.20.110">
    <property type="entry name" value="Ribulose bisphosphate carboxylase, large subunit, C-terminal domain"/>
    <property type="match status" value="1"/>
</dbReference>
<dbReference type="Gene3D" id="3.30.70.150">
    <property type="entry name" value="RuBisCO large subunit, N-terminal domain"/>
    <property type="match status" value="1"/>
</dbReference>
<dbReference type="HAMAP" id="MF_01338">
    <property type="entry name" value="RuBisCO_L_type1"/>
    <property type="match status" value="1"/>
</dbReference>
<dbReference type="InterPro" id="IPR033966">
    <property type="entry name" value="RuBisCO"/>
</dbReference>
<dbReference type="InterPro" id="IPR020878">
    <property type="entry name" value="RuBisCo_large_chain_AS"/>
</dbReference>
<dbReference type="InterPro" id="IPR000685">
    <property type="entry name" value="RuBisCO_lsu_C"/>
</dbReference>
<dbReference type="InterPro" id="IPR036376">
    <property type="entry name" value="RuBisCO_lsu_C_sf"/>
</dbReference>
<dbReference type="InterPro" id="IPR017443">
    <property type="entry name" value="RuBisCO_lsu_fd_N"/>
</dbReference>
<dbReference type="InterPro" id="IPR036422">
    <property type="entry name" value="RuBisCO_lsu_N_sf"/>
</dbReference>
<dbReference type="InterPro" id="IPR020888">
    <property type="entry name" value="RuBisCO_lsuI"/>
</dbReference>
<dbReference type="NCBIfam" id="NF003252">
    <property type="entry name" value="PRK04208.1"/>
    <property type="match status" value="1"/>
</dbReference>
<dbReference type="PANTHER" id="PTHR42704">
    <property type="entry name" value="RIBULOSE BISPHOSPHATE CARBOXYLASE"/>
    <property type="match status" value="1"/>
</dbReference>
<dbReference type="PANTHER" id="PTHR42704:SF17">
    <property type="entry name" value="RIBULOSE BISPHOSPHATE CARBOXYLASE LARGE CHAIN"/>
    <property type="match status" value="1"/>
</dbReference>
<dbReference type="Pfam" id="PF00016">
    <property type="entry name" value="RuBisCO_large"/>
    <property type="match status" value="1"/>
</dbReference>
<dbReference type="Pfam" id="PF02788">
    <property type="entry name" value="RuBisCO_large_N"/>
    <property type="match status" value="1"/>
</dbReference>
<dbReference type="SFLD" id="SFLDG01052">
    <property type="entry name" value="RuBisCO"/>
    <property type="match status" value="1"/>
</dbReference>
<dbReference type="SFLD" id="SFLDS00014">
    <property type="entry name" value="RuBisCO"/>
    <property type="match status" value="1"/>
</dbReference>
<dbReference type="SFLD" id="SFLDG00301">
    <property type="entry name" value="RuBisCO-like_proteins"/>
    <property type="match status" value="1"/>
</dbReference>
<dbReference type="SUPFAM" id="SSF51649">
    <property type="entry name" value="RuBisCo, C-terminal domain"/>
    <property type="match status" value="1"/>
</dbReference>
<dbReference type="SUPFAM" id="SSF54966">
    <property type="entry name" value="RuBisCO, large subunit, small (N-terminal) domain"/>
    <property type="match status" value="1"/>
</dbReference>
<dbReference type="PROSITE" id="PS00157">
    <property type="entry name" value="RUBISCO_LARGE"/>
    <property type="match status" value="1"/>
</dbReference>
<comment type="function">
    <text evidence="1">RuBisCO catalyzes two reactions: the carboxylation of D-ribulose 1,5-bisphosphate, the primary event in carbon dioxide fixation, as well as the oxidative fragmentation of the pentose substrate. Both reactions occur simultaneously and in competition at the same active site.</text>
</comment>
<comment type="catalytic activity">
    <reaction evidence="1">
        <text>2 (2R)-3-phosphoglycerate + 2 H(+) = D-ribulose 1,5-bisphosphate + CO2 + H2O</text>
        <dbReference type="Rhea" id="RHEA:23124"/>
        <dbReference type="ChEBI" id="CHEBI:15377"/>
        <dbReference type="ChEBI" id="CHEBI:15378"/>
        <dbReference type="ChEBI" id="CHEBI:16526"/>
        <dbReference type="ChEBI" id="CHEBI:57870"/>
        <dbReference type="ChEBI" id="CHEBI:58272"/>
        <dbReference type="EC" id="4.1.1.39"/>
    </reaction>
</comment>
<comment type="catalytic activity">
    <reaction evidence="1">
        <text>D-ribulose 1,5-bisphosphate + O2 = 2-phosphoglycolate + (2R)-3-phosphoglycerate + 2 H(+)</text>
        <dbReference type="Rhea" id="RHEA:36631"/>
        <dbReference type="ChEBI" id="CHEBI:15378"/>
        <dbReference type="ChEBI" id="CHEBI:15379"/>
        <dbReference type="ChEBI" id="CHEBI:57870"/>
        <dbReference type="ChEBI" id="CHEBI:58033"/>
        <dbReference type="ChEBI" id="CHEBI:58272"/>
    </reaction>
</comment>
<comment type="cofactor">
    <cofactor evidence="1">
        <name>Mg(2+)</name>
        <dbReference type="ChEBI" id="CHEBI:18420"/>
    </cofactor>
    <text evidence="1">Binds 1 Mg(2+) ion per subunit.</text>
</comment>
<comment type="subunit">
    <text evidence="1">Heterohexadecamer of 8 large chains and 8 small chains.</text>
</comment>
<comment type="miscellaneous">
    <text evidence="1">The basic functional RuBisCO is composed of a large chain homodimer in a 'head-to-tail' conformation. In form I RuBisCO this homodimer is arranged in a barrel-like tetramer with the small subunits forming a tetrameric 'cap' on each end of the 'barrel'.</text>
</comment>
<comment type="similarity">
    <text evidence="1">Belongs to the RuBisCO large chain family. Type I subfamily.</text>
</comment>
<keyword id="KW-0113">Calvin cycle</keyword>
<keyword id="KW-0120">Carbon dioxide fixation</keyword>
<keyword id="KW-0456">Lyase</keyword>
<keyword id="KW-0460">Magnesium</keyword>
<keyword id="KW-0479">Metal-binding</keyword>
<keyword id="KW-0503">Monooxygenase</keyword>
<keyword id="KW-0560">Oxidoreductase</keyword>
<keyword id="KW-1185">Reference proteome</keyword>
<proteinExistence type="inferred from homology"/>
<accession>Q2YB78</accession>
<sequence>MSEAITGAERYKSGVIPYKKMGYWEPDYVPKDTDIIAMFRITPQAGVEPEEAAAAVAGESSTATWTVVWTDRLTACELYRAKAFRTDPVPNTGEGTKTEQQYFAYIAYDLDLFEPGSIANLTASIIGNVFGFKAVKALRLEDMRIPVAYLKTFQGPATGIIVERERLDKFGRPLLGATTKPKLGLSGRNYGRVVYEGLKGGLDFMKDDENINSQPFMHWRDRFLYCMEAVNKASAATGEVKGHYLNVTAGTMEEMYERAEFAKSLGSVIIMIDLVIGYTAIQSMAKWARKNDMILHLHRAGNSTYSRQKNHGMNFRVICKWMRMAGVDHIHAGTVVGKLEGDPLMIKGFYDTLRDRHTPVSLEHGLFFEQDWASLNKVMPVASGGIHAGQMHQLLDYLGEDVILQFGGGTIGHPQGIQAGAVANRVALEAMIMARNEGRDYVKEGPQILEEAAKWCTPLKLALDTWKDITFNYESTDTADFVPSETASV</sequence>
<reference key="1">
    <citation type="submission" date="2005-08" db="EMBL/GenBank/DDBJ databases">
        <title>Complete sequence of chromosome 1 of Nitrosospira multiformis ATCC 25196.</title>
        <authorList>
            <person name="Copeland A."/>
            <person name="Lucas S."/>
            <person name="Lapidus A."/>
            <person name="Barry K."/>
            <person name="Detter J.C."/>
            <person name="Glavina T."/>
            <person name="Hammon N."/>
            <person name="Israni S."/>
            <person name="Pitluck S."/>
            <person name="Chain P."/>
            <person name="Malfatti S."/>
            <person name="Shin M."/>
            <person name="Vergez L."/>
            <person name="Schmutz J."/>
            <person name="Larimer F."/>
            <person name="Land M."/>
            <person name="Hauser L."/>
            <person name="Kyrpides N."/>
            <person name="Lykidis A."/>
            <person name="Richardson P."/>
        </authorList>
    </citation>
    <scope>NUCLEOTIDE SEQUENCE [LARGE SCALE GENOMIC DNA]</scope>
    <source>
        <strain>ATCC 25196 / NCIMB 11849 / C 71</strain>
    </source>
</reference>
<gene>
    <name evidence="1" type="primary">cbbL</name>
    <name type="ordered locus">Nmul_A0686</name>
</gene>